<protein>
    <recommendedName>
        <fullName evidence="1">Glutamyl-tRNA(Gln) amidotransferase subunit A</fullName>
        <shortName evidence="1">Glu-ADT subunit A</shortName>
        <ecNumber evidence="1">6.3.5.7</ecNumber>
    </recommendedName>
</protein>
<feature type="chain" id="PRO_1000015822" description="Glutamyl-tRNA(Gln) amidotransferase subunit A">
    <location>
        <begin position="1"/>
        <end position="485"/>
    </location>
</feature>
<feature type="active site" description="Charge relay system" evidence="1">
    <location>
        <position position="79"/>
    </location>
</feature>
<feature type="active site" description="Charge relay system" evidence="1">
    <location>
        <position position="154"/>
    </location>
</feature>
<feature type="active site" description="Acyl-ester intermediate" evidence="1">
    <location>
        <position position="178"/>
    </location>
</feature>
<dbReference type="EC" id="6.3.5.7" evidence="1"/>
<dbReference type="EMBL" id="CP000726">
    <property type="protein sequence ID" value="ABS32499.1"/>
    <property type="molecule type" value="Genomic_DNA"/>
</dbReference>
<dbReference type="RefSeq" id="WP_012048224.1">
    <property type="nucleotide sequence ID" value="NC_009697.1"/>
</dbReference>
<dbReference type="SMR" id="A7FYL3"/>
<dbReference type="GeneID" id="5187520"/>
<dbReference type="KEGG" id="cba:CLB_3323"/>
<dbReference type="HOGENOM" id="CLU_009600_0_3_9"/>
<dbReference type="GO" id="GO:0030956">
    <property type="term" value="C:glutamyl-tRNA(Gln) amidotransferase complex"/>
    <property type="evidence" value="ECO:0007669"/>
    <property type="project" value="InterPro"/>
</dbReference>
<dbReference type="GO" id="GO:0005524">
    <property type="term" value="F:ATP binding"/>
    <property type="evidence" value="ECO:0007669"/>
    <property type="project" value="UniProtKB-KW"/>
</dbReference>
<dbReference type="GO" id="GO:0050567">
    <property type="term" value="F:glutaminyl-tRNA synthase (glutamine-hydrolyzing) activity"/>
    <property type="evidence" value="ECO:0007669"/>
    <property type="project" value="UniProtKB-UniRule"/>
</dbReference>
<dbReference type="GO" id="GO:0006412">
    <property type="term" value="P:translation"/>
    <property type="evidence" value="ECO:0007669"/>
    <property type="project" value="UniProtKB-UniRule"/>
</dbReference>
<dbReference type="Gene3D" id="3.90.1300.10">
    <property type="entry name" value="Amidase signature (AS) domain"/>
    <property type="match status" value="1"/>
</dbReference>
<dbReference type="HAMAP" id="MF_00120">
    <property type="entry name" value="GatA"/>
    <property type="match status" value="1"/>
</dbReference>
<dbReference type="InterPro" id="IPR000120">
    <property type="entry name" value="Amidase"/>
</dbReference>
<dbReference type="InterPro" id="IPR020556">
    <property type="entry name" value="Amidase_CS"/>
</dbReference>
<dbReference type="InterPro" id="IPR023631">
    <property type="entry name" value="Amidase_dom"/>
</dbReference>
<dbReference type="InterPro" id="IPR036928">
    <property type="entry name" value="AS_sf"/>
</dbReference>
<dbReference type="InterPro" id="IPR004412">
    <property type="entry name" value="GatA"/>
</dbReference>
<dbReference type="NCBIfam" id="TIGR00132">
    <property type="entry name" value="gatA"/>
    <property type="match status" value="1"/>
</dbReference>
<dbReference type="PANTHER" id="PTHR11895:SF151">
    <property type="entry name" value="GLUTAMYL-TRNA(GLN) AMIDOTRANSFERASE SUBUNIT A"/>
    <property type="match status" value="1"/>
</dbReference>
<dbReference type="PANTHER" id="PTHR11895">
    <property type="entry name" value="TRANSAMIDASE"/>
    <property type="match status" value="1"/>
</dbReference>
<dbReference type="Pfam" id="PF01425">
    <property type="entry name" value="Amidase"/>
    <property type="match status" value="1"/>
</dbReference>
<dbReference type="SUPFAM" id="SSF75304">
    <property type="entry name" value="Amidase signature (AS) enzymes"/>
    <property type="match status" value="1"/>
</dbReference>
<dbReference type="PROSITE" id="PS00571">
    <property type="entry name" value="AMIDASES"/>
    <property type="match status" value="1"/>
</dbReference>
<proteinExistence type="inferred from homology"/>
<gene>
    <name evidence="1" type="primary">gatA</name>
    <name type="ordered locus">CLB_3323</name>
</gene>
<name>GATA_CLOB1</name>
<accession>A7FYL3</accession>
<organism>
    <name type="scientific">Clostridium botulinum (strain ATCC 19397 / Type A)</name>
    <dbReference type="NCBI Taxonomy" id="441770"/>
    <lineage>
        <taxon>Bacteria</taxon>
        <taxon>Bacillati</taxon>
        <taxon>Bacillota</taxon>
        <taxon>Clostridia</taxon>
        <taxon>Eubacteriales</taxon>
        <taxon>Clostridiaceae</taxon>
        <taxon>Clostridium</taxon>
    </lineage>
</organism>
<reference key="1">
    <citation type="journal article" date="2007" name="PLoS ONE">
        <title>Analysis of the neurotoxin complex genes in Clostridium botulinum A1-A4 and B1 strains: BoNT/A3, /Ba4 and /B1 clusters are located within plasmids.</title>
        <authorList>
            <person name="Smith T.J."/>
            <person name="Hill K.K."/>
            <person name="Foley B.T."/>
            <person name="Detter J.C."/>
            <person name="Munk A.C."/>
            <person name="Bruce D.C."/>
            <person name="Doggett N.A."/>
            <person name="Smith L.A."/>
            <person name="Marks J.D."/>
            <person name="Xie G."/>
            <person name="Brettin T.S."/>
        </authorList>
    </citation>
    <scope>NUCLEOTIDE SEQUENCE [LARGE SCALE GENOMIC DNA]</scope>
    <source>
        <strain>ATCC 19397 / Type A</strain>
    </source>
</reference>
<evidence type="ECO:0000255" key="1">
    <source>
        <dbReference type="HAMAP-Rule" id="MF_00120"/>
    </source>
</evidence>
<keyword id="KW-0067">ATP-binding</keyword>
<keyword id="KW-0436">Ligase</keyword>
<keyword id="KW-0547">Nucleotide-binding</keyword>
<keyword id="KW-0648">Protein biosynthesis</keyword>
<sequence>MDLTKLTAHELKDMLSNKEVKAEEITKAFLDRINLVDNKLGAYLYVSEEEAIKKAKEIDGKIEKNEELKALSGIPVGIKDNINVKGMQNTCASKILEGYTSPYDAHVTEKIKQEEGIILGKLNMDEFAMGSSTENSAFKLAKNPWDLERVPGGSSGGSAVAVAGSEATLSLGTDTGGSVRQPASFCGVVGLKPTYGRISRSGVVAFGSTLDQVGPMGKDVEDCALLTSVIAGLDKKDFTTVDKEVPDYKKSLTKDIKGKRIGIPKEFFGDGLDKNVRKSVEEAIKVLEANGAEVKPCSLPLMDYALSAYYIISSAEASSNLARFDGIRYGYRSKNFKDAKDIYLKSRSEGFGDEVKRRIMLGTYVLSAGYYDAYYKKALKVRKLIKDDFQRVFKEFDAIVSPTSPTTAFKVGEKKDDVMSMYLSDIYTVPISVAGVPAISLPCGMIDGLPVGLQIISDYFKEDVLFNLAYNYEQSVDFHKMRADF</sequence>
<comment type="function">
    <text evidence="1">Allows the formation of correctly charged Gln-tRNA(Gln) through the transamidation of misacylated Glu-tRNA(Gln) in organisms which lack glutaminyl-tRNA synthetase. The reaction takes place in the presence of glutamine and ATP through an activated gamma-phospho-Glu-tRNA(Gln).</text>
</comment>
<comment type="catalytic activity">
    <reaction evidence="1">
        <text>L-glutamyl-tRNA(Gln) + L-glutamine + ATP + H2O = L-glutaminyl-tRNA(Gln) + L-glutamate + ADP + phosphate + H(+)</text>
        <dbReference type="Rhea" id="RHEA:17521"/>
        <dbReference type="Rhea" id="RHEA-COMP:9681"/>
        <dbReference type="Rhea" id="RHEA-COMP:9684"/>
        <dbReference type="ChEBI" id="CHEBI:15377"/>
        <dbReference type="ChEBI" id="CHEBI:15378"/>
        <dbReference type="ChEBI" id="CHEBI:29985"/>
        <dbReference type="ChEBI" id="CHEBI:30616"/>
        <dbReference type="ChEBI" id="CHEBI:43474"/>
        <dbReference type="ChEBI" id="CHEBI:58359"/>
        <dbReference type="ChEBI" id="CHEBI:78520"/>
        <dbReference type="ChEBI" id="CHEBI:78521"/>
        <dbReference type="ChEBI" id="CHEBI:456216"/>
        <dbReference type="EC" id="6.3.5.7"/>
    </reaction>
</comment>
<comment type="subunit">
    <text evidence="1">Heterotrimer of A, B and C subunits.</text>
</comment>
<comment type="similarity">
    <text evidence="1">Belongs to the amidase family. GatA subfamily.</text>
</comment>